<feature type="chain" id="PRO_0000307688" description="Retinol dehydrogenase 10-B">
    <location>
        <begin position="1"/>
        <end position="341"/>
    </location>
</feature>
<feature type="transmembrane region" description="Helical; Signal-anchor" evidence="2">
    <location>
        <begin position="3"/>
        <end position="23"/>
    </location>
</feature>
<feature type="active site" description="Proton acceptor" evidence="3">
    <location>
        <position position="210"/>
    </location>
</feature>
<feature type="binding site" evidence="1">
    <location>
        <begin position="40"/>
        <end position="64"/>
    </location>
    <ligand>
        <name>NADP(+)</name>
        <dbReference type="ChEBI" id="CHEBI:58349"/>
    </ligand>
</feature>
<feature type="binding site" evidence="1">
    <location>
        <position position="197"/>
    </location>
    <ligand>
        <name>substrate</name>
    </ligand>
</feature>
<evidence type="ECO:0000250" key="1"/>
<evidence type="ECO:0000255" key="2"/>
<evidence type="ECO:0000255" key="3">
    <source>
        <dbReference type="PROSITE-ProRule" id="PRU10001"/>
    </source>
</evidence>
<evidence type="ECO:0000305" key="4"/>
<reference key="1">
    <citation type="submission" date="2004-05" db="EMBL/GenBank/DDBJ databases">
        <authorList>
            <consortium name="NIH - Xenopus Gene Collection (XGC) project"/>
        </authorList>
    </citation>
    <scope>NUCLEOTIDE SEQUENCE [LARGE SCALE MRNA]</scope>
    <source>
        <tissue>Embryo</tissue>
    </source>
</reference>
<dbReference type="EC" id="1.1.1.300"/>
<dbReference type="EMBL" id="BC070608">
    <property type="protein sequence ID" value="AAH70608.1"/>
    <property type="molecule type" value="mRNA"/>
</dbReference>
<dbReference type="RefSeq" id="NP_001084938.1">
    <property type="nucleotide sequence ID" value="NM_001091469.1"/>
</dbReference>
<dbReference type="SMR" id="Q6NRV4"/>
<dbReference type="DNASU" id="431995"/>
<dbReference type="GeneID" id="431995"/>
<dbReference type="KEGG" id="xla:431995"/>
<dbReference type="AGR" id="Xenbase:XB-GENE-6251537"/>
<dbReference type="CTD" id="431995"/>
<dbReference type="Xenbase" id="XB-GENE-6251537">
    <property type="gene designation" value="rdh10.S"/>
</dbReference>
<dbReference type="OrthoDB" id="5840532at2759"/>
<dbReference type="UniPathway" id="UPA00912"/>
<dbReference type="Proteomes" id="UP000186698">
    <property type="component" value="Chromosome 6S"/>
</dbReference>
<dbReference type="Bgee" id="431995">
    <property type="expression patterns" value="Expressed in internal ear and 19 other cell types or tissues"/>
</dbReference>
<dbReference type="GO" id="GO:0005789">
    <property type="term" value="C:endoplasmic reticulum membrane"/>
    <property type="evidence" value="ECO:0007669"/>
    <property type="project" value="UniProtKB-SubCell"/>
</dbReference>
<dbReference type="GO" id="GO:0005811">
    <property type="term" value="C:lipid droplet"/>
    <property type="evidence" value="ECO:0000318"/>
    <property type="project" value="GO_Central"/>
</dbReference>
<dbReference type="GO" id="GO:0052650">
    <property type="term" value="F:all-trans-retinol dehydrogenase (NADP+) activity"/>
    <property type="evidence" value="ECO:0007669"/>
    <property type="project" value="UniProtKB-EC"/>
</dbReference>
<dbReference type="GO" id="GO:0016616">
    <property type="term" value="F:oxidoreductase activity, acting on the CH-OH group of donors, NAD or NADP as acceptor"/>
    <property type="evidence" value="ECO:0000318"/>
    <property type="project" value="GO_Central"/>
</dbReference>
<dbReference type="CDD" id="cd05339">
    <property type="entry name" value="17beta-HSDXI-like_SDR_c"/>
    <property type="match status" value="1"/>
</dbReference>
<dbReference type="FunFam" id="3.40.50.720:FF:000177">
    <property type="entry name" value="Retinol dehydrogenase 10"/>
    <property type="match status" value="1"/>
</dbReference>
<dbReference type="Gene3D" id="3.40.50.720">
    <property type="entry name" value="NAD(P)-binding Rossmann-like Domain"/>
    <property type="match status" value="1"/>
</dbReference>
<dbReference type="InterPro" id="IPR036291">
    <property type="entry name" value="NAD(P)-bd_dom_sf"/>
</dbReference>
<dbReference type="InterPro" id="IPR020904">
    <property type="entry name" value="Sc_DH/Rdtase_CS"/>
</dbReference>
<dbReference type="InterPro" id="IPR002347">
    <property type="entry name" value="SDR_fam"/>
</dbReference>
<dbReference type="PANTHER" id="PTHR24322">
    <property type="entry name" value="PKSB"/>
    <property type="match status" value="1"/>
</dbReference>
<dbReference type="PANTHER" id="PTHR24322:SF750">
    <property type="entry name" value="RETINOL DEHYDROGENASE 10"/>
    <property type="match status" value="1"/>
</dbReference>
<dbReference type="Pfam" id="PF00106">
    <property type="entry name" value="adh_short"/>
    <property type="match status" value="1"/>
</dbReference>
<dbReference type="PRINTS" id="PR00081">
    <property type="entry name" value="GDHRDH"/>
</dbReference>
<dbReference type="PRINTS" id="PR00080">
    <property type="entry name" value="SDRFAMILY"/>
</dbReference>
<dbReference type="SUPFAM" id="SSF51735">
    <property type="entry name" value="NAD(P)-binding Rossmann-fold domains"/>
    <property type="match status" value="1"/>
</dbReference>
<dbReference type="PROSITE" id="PS00061">
    <property type="entry name" value="ADH_SHORT"/>
    <property type="match status" value="1"/>
</dbReference>
<gene>
    <name type="primary">rdh10-b</name>
</gene>
<sequence>MHIVLEFFLVTFRVLWAFVLAAAKWFVRPKDKNVAGQVCLITGAGSGLGRLFALEFARRRAQLVLWDINPQSNEETADMVRDIYRQLQAEDSARRANSSADEEVLPCCNLQVYTYTCDVGKRESVYSTAERVRREVGDVYLLLNNAGVVSGHHLLECPDELIERTMMVNCHAHFWTTKAFLPKMMEMNHGHIVSVASSLGLFSTAGVEDYCASKFGVVGFHESLSHELKAADKDGIKTTLVCPYLVDTGMFRGCRIRKEIEPFLPPLKPDYCVKQAMRAILTDQPMICTPRLMYIVLCMKSILPFEAVVCMYRFLGADKCMYPFIAQRKQATNNNETKNGI</sequence>
<keyword id="KW-0256">Endoplasmic reticulum</keyword>
<keyword id="KW-0472">Membrane</keyword>
<keyword id="KW-0492">Microsome</keyword>
<keyword id="KW-0521">NADP</keyword>
<keyword id="KW-0560">Oxidoreductase</keyword>
<keyword id="KW-1185">Reference proteome</keyword>
<keyword id="KW-0735">Signal-anchor</keyword>
<keyword id="KW-0812">Transmembrane</keyword>
<keyword id="KW-1133">Transmembrane helix</keyword>
<accession>Q6NRV4</accession>
<comment type="function">
    <text evidence="1">Retinol dehydrogenase with a clear preference for NADP. Converts all-trans-retinol to all-trans-retinal. Has no detectable activity towards 11-cis-retinol, 9-cis-retinol and 13-cis-retinol (By similarity).</text>
</comment>
<comment type="catalytic activity">
    <reaction>
        <text>all-trans-retinol + NADP(+) = all-trans-retinal + NADPH + H(+)</text>
        <dbReference type="Rhea" id="RHEA:25033"/>
        <dbReference type="ChEBI" id="CHEBI:15378"/>
        <dbReference type="ChEBI" id="CHEBI:17336"/>
        <dbReference type="ChEBI" id="CHEBI:17898"/>
        <dbReference type="ChEBI" id="CHEBI:57783"/>
        <dbReference type="ChEBI" id="CHEBI:58349"/>
        <dbReference type="EC" id="1.1.1.300"/>
    </reaction>
</comment>
<comment type="pathway">
    <text>Cofactor metabolism; retinol metabolism.</text>
</comment>
<comment type="subcellular location">
    <subcellularLocation>
        <location evidence="4">Microsome membrane</location>
        <topology evidence="4">Single-pass membrane protein</topology>
    </subcellularLocation>
    <subcellularLocation>
        <location evidence="4">Endoplasmic reticulum membrane</location>
        <topology evidence="4">Single-pass membrane protein</topology>
    </subcellularLocation>
</comment>
<comment type="similarity">
    <text evidence="4">Belongs to the short-chain dehydrogenases/reductases (SDR) family.</text>
</comment>
<proteinExistence type="evidence at transcript level"/>
<name>RD10B_XENLA</name>
<organism>
    <name type="scientific">Xenopus laevis</name>
    <name type="common">African clawed frog</name>
    <dbReference type="NCBI Taxonomy" id="8355"/>
    <lineage>
        <taxon>Eukaryota</taxon>
        <taxon>Metazoa</taxon>
        <taxon>Chordata</taxon>
        <taxon>Craniata</taxon>
        <taxon>Vertebrata</taxon>
        <taxon>Euteleostomi</taxon>
        <taxon>Amphibia</taxon>
        <taxon>Batrachia</taxon>
        <taxon>Anura</taxon>
        <taxon>Pipoidea</taxon>
        <taxon>Pipidae</taxon>
        <taxon>Xenopodinae</taxon>
        <taxon>Xenopus</taxon>
        <taxon>Xenopus</taxon>
    </lineage>
</organism>
<protein>
    <recommendedName>
        <fullName>Retinol dehydrogenase 10-B</fullName>
        <ecNumber>1.1.1.300</ecNumber>
    </recommendedName>
</protein>